<organism>
    <name type="scientific">Lachancea kluyveri (strain ATCC 58438 / CBS 3082 / BCRC 21498 / NBRC 1685 / JCM 7257 / NCYC 543 / NRRL Y-12651)</name>
    <name type="common">Yeast</name>
    <name type="synonym">Saccharomyces kluyveri</name>
    <dbReference type="NCBI Taxonomy" id="226302"/>
    <lineage>
        <taxon>Eukaryota</taxon>
        <taxon>Fungi</taxon>
        <taxon>Dikarya</taxon>
        <taxon>Ascomycota</taxon>
        <taxon>Saccharomycotina</taxon>
        <taxon>Saccharomycetes</taxon>
        <taxon>Saccharomycetales</taxon>
        <taxon>Saccharomycetaceae</taxon>
        <taxon>Lachancea</taxon>
    </lineage>
</organism>
<accession>Q875P5</accession>
<feature type="chain" id="PRO_0000078395" description="Heat shock protein homolog SSE1">
    <location>
        <begin position="1"/>
        <end position="693"/>
    </location>
</feature>
<feature type="region of interest" description="Disordered" evidence="2">
    <location>
        <begin position="665"/>
        <end position="693"/>
    </location>
</feature>
<feature type="compositionally biased region" description="Basic and acidic residues" evidence="2">
    <location>
        <begin position="673"/>
        <end position="686"/>
    </location>
</feature>
<evidence type="ECO:0000250" key="1"/>
<evidence type="ECO:0000256" key="2">
    <source>
        <dbReference type="SAM" id="MobiDB-lite"/>
    </source>
</evidence>
<evidence type="ECO:0000305" key="3"/>
<dbReference type="EMBL" id="AY145024">
    <property type="protein sequence ID" value="AAO32586.1"/>
    <property type="molecule type" value="Genomic_DNA"/>
</dbReference>
<dbReference type="SMR" id="Q875P5"/>
<dbReference type="GO" id="GO:0005829">
    <property type="term" value="C:cytosol"/>
    <property type="evidence" value="ECO:0007669"/>
    <property type="project" value="TreeGrafter"/>
</dbReference>
<dbReference type="GO" id="GO:0005634">
    <property type="term" value="C:nucleus"/>
    <property type="evidence" value="ECO:0007669"/>
    <property type="project" value="TreeGrafter"/>
</dbReference>
<dbReference type="GO" id="GO:0005524">
    <property type="term" value="F:ATP binding"/>
    <property type="evidence" value="ECO:0007669"/>
    <property type="project" value="UniProtKB-KW"/>
</dbReference>
<dbReference type="GO" id="GO:0140662">
    <property type="term" value="F:ATP-dependent protein folding chaperone"/>
    <property type="evidence" value="ECO:0007669"/>
    <property type="project" value="InterPro"/>
</dbReference>
<dbReference type="CDD" id="cd24094">
    <property type="entry name" value="ASKHA_NBD_HSP70_ScSse"/>
    <property type="match status" value="1"/>
</dbReference>
<dbReference type="FunFam" id="1.20.1270.10:FF:000002">
    <property type="entry name" value="Heat shock 70 kDa protein 4"/>
    <property type="match status" value="1"/>
</dbReference>
<dbReference type="FunFam" id="3.30.30.30:FF:000002">
    <property type="entry name" value="Heat shock 70 kDa protein 4"/>
    <property type="match status" value="1"/>
</dbReference>
<dbReference type="FunFam" id="3.30.420.40:FF:000171">
    <property type="entry name" value="Heat shock 70 kDa protein 4"/>
    <property type="match status" value="2"/>
</dbReference>
<dbReference type="FunFam" id="3.90.640.10:FF:000004">
    <property type="entry name" value="Heat shock 70 kDa protein 4"/>
    <property type="match status" value="1"/>
</dbReference>
<dbReference type="FunFam" id="2.60.34.10:FF:000020">
    <property type="entry name" value="Heat shock SSE1"/>
    <property type="match status" value="1"/>
</dbReference>
<dbReference type="Gene3D" id="1.20.1270.10">
    <property type="match status" value="1"/>
</dbReference>
<dbReference type="Gene3D" id="3.30.30.30">
    <property type="match status" value="1"/>
</dbReference>
<dbReference type="Gene3D" id="3.30.420.40">
    <property type="match status" value="2"/>
</dbReference>
<dbReference type="Gene3D" id="3.90.640.10">
    <property type="entry name" value="Actin, Chain A, domain 4"/>
    <property type="match status" value="1"/>
</dbReference>
<dbReference type="Gene3D" id="2.60.34.10">
    <property type="entry name" value="Substrate Binding Domain Of DNAk, Chain A, domain 1"/>
    <property type="match status" value="1"/>
</dbReference>
<dbReference type="InterPro" id="IPR043129">
    <property type="entry name" value="ATPase_NBD"/>
</dbReference>
<dbReference type="InterPro" id="IPR029048">
    <property type="entry name" value="HSP70_C_sf"/>
</dbReference>
<dbReference type="InterPro" id="IPR029047">
    <property type="entry name" value="HSP70_peptide-bd_sf"/>
</dbReference>
<dbReference type="InterPro" id="IPR013126">
    <property type="entry name" value="Hsp_70_fam"/>
</dbReference>
<dbReference type="PANTHER" id="PTHR45639:SF4">
    <property type="entry name" value="HSC70CB, ISOFORM G"/>
    <property type="match status" value="1"/>
</dbReference>
<dbReference type="PANTHER" id="PTHR45639">
    <property type="entry name" value="HSC70CB, ISOFORM G-RELATED"/>
    <property type="match status" value="1"/>
</dbReference>
<dbReference type="Pfam" id="PF00012">
    <property type="entry name" value="HSP70"/>
    <property type="match status" value="1"/>
</dbReference>
<dbReference type="PRINTS" id="PR00301">
    <property type="entry name" value="HEATSHOCK70"/>
</dbReference>
<dbReference type="SUPFAM" id="SSF53067">
    <property type="entry name" value="Actin-like ATPase domain"/>
    <property type="match status" value="2"/>
</dbReference>
<dbReference type="SUPFAM" id="SSF100934">
    <property type="entry name" value="Heat shock protein 70kD (HSP70), C-terminal subdomain"/>
    <property type="match status" value="1"/>
</dbReference>
<dbReference type="SUPFAM" id="SSF100920">
    <property type="entry name" value="Heat shock protein 70kD (HSP70), peptide-binding domain"/>
    <property type="match status" value="1"/>
</dbReference>
<reference key="1">
    <citation type="journal article" date="2003" name="Nature">
        <title>Yeast genome duplication was followed by asynchronous differentiation of duplicated genes.</title>
        <authorList>
            <person name="Langkjaer R.B."/>
            <person name="Cliften P.F."/>
            <person name="Johnston M."/>
            <person name="Piskur J."/>
        </authorList>
    </citation>
    <scope>NUCLEOTIDE SEQUENCE [GENOMIC DNA]</scope>
    <source>
        <strain>ATCC 58438 / CBS 3082 / BCRC 21498 / NBRC 1685 / JCM 7257 / NCYC 543 / NRRL Y-12651</strain>
    </source>
</reference>
<sequence length="693" mass="77017">MSIPFGLDLGNNSSVLAVARNRGIDIIVNEVSNRSTPSLVGFGQKNRFLGESGKNKQTSNIKNTVDNLKRIVGLDYDHPDFEQESKYFSSKLVKLDDGKVGAQVRFAGKQQTFSATQLAAMYINKVKTTAVQETKGNITDVAIAVPAWYTEEQRYSIGDAAKIAGLNPVRIVNDVTAAAVSYGVFKTDLPEGEEKPRVVAFVDIGHSTYTCTIAAFKKGELKVLATAYDKHFGGRDFDRAITEHFADEFKTKYKIDIRENPKAYSRILAAAEKLKKVLSANTAAPFSVESVMNDVDVSSQLSREELEELVSPLLSRVTEPITKALAQANLTPEEVDYVEIVGGTTRIPSLKNAISEAFGKQLSTTLNQDEAIAKGAAFICAIHSPTLRVRPFKFEDIHPYSVSYSWDKQEEDEDHLEVFPAGSSYPSTKLITLQRTGDFSMQAKYTNKEELPEGTSAEIAKWDITGVQVSEGETSVPVKLKLRCDPSGLHIIEDAYTVEDIKVQELVPLPADAPEDAEPEYREVTKTVKKDTLTIIAHTFALEEKALNALIEKENELSAQDKLVAETEDRKNALEEYIYTLRGKLDEEYSDFASDDEKTRLKEMLAKAEDWLYDEGYDSIKAKYIAKYEELASLGNIIRGRYLAKEEEKRQALRSKQEASKMAELAEKLAAQRKAESEKKESKADAEGDVELD</sequence>
<protein>
    <recommendedName>
        <fullName>Heat shock protein homolog SSE1</fullName>
    </recommendedName>
</protein>
<proteinExistence type="inferred from homology"/>
<name>HSP7F_LACK1</name>
<keyword id="KW-0067">ATP-binding</keyword>
<keyword id="KW-0143">Chaperone</keyword>
<keyword id="KW-0963">Cytoplasm</keyword>
<keyword id="KW-0547">Nucleotide-binding</keyword>
<keyword id="KW-0346">Stress response</keyword>
<comment type="subcellular location">
    <subcellularLocation>
        <location evidence="1">Cytoplasm</location>
    </subcellularLocation>
</comment>
<comment type="similarity">
    <text evidence="3">Belongs to the heat shock protein 70 family.</text>
</comment>
<gene>
    <name type="primary">SSE1</name>
</gene>